<reference key="1">
    <citation type="journal article" date="2004" name="Nat. Biotechnol.">
        <title>The genome sequence of the extreme thermophile Thermus thermophilus.</title>
        <authorList>
            <person name="Henne A."/>
            <person name="Brueggemann H."/>
            <person name="Raasch C."/>
            <person name="Wiezer A."/>
            <person name="Hartsch T."/>
            <person name="Liesegang H."/>
            <person name="Johann A."/>
            <person name="Lienard T."/>
            <person name="Gohl O."/>
            <person name="Martinez-Arias R."/>
            <person name="Jacobi C."/>
            <person name="Starkuviene V."/>
            <person name="Schlenczeck S."/>
            <person name="Dencker S."/>
            <person name="Huber R."/>
            <person name="Klenk H.-P."/>
            <person name="Kramer W."/>
            <person name="Merkl R."/>
            <person name="Gottschalk G."/>
            <person name="Fritz H.-J."/>
        </authorList>
    </citation>
    <scope>NUCLEOTIDE SEQUENCE [LARGE SCALE GENOMIC DNA]</scope>
    <source>
        <strain>ATCC BAA-163 / DSM 7039 / HB27</strain>
    </source>
</reference>
<feature type="chain" id="PRO_0000023181" description="Aspartate 1-decarboxylase beta chain" evidence="1">
    <location>
        <begin position="1"/>
        <end position="24"/>
    </location>
</feature>
<feature type="chain" id="PRO_0000023182" description="Aspartate 1-decarboxylase alpha chain" evidence="1">
    <location>
        <begin position="25"/>
        <end position="120"/>
    </location>
</feature>
<feature type="active site" description="Schiff-base intermediate with substrate; via pyruvic acid" evidence="1">
    <location>
        <position position="25"/>
    </location>
</feature>
<feature type="active site" description="Proton donor" evidence="1">
    <location>
        <position position="58"/>
    </location>
</feature>
<feature type="binding site" evidence="1">
    <location>
        <position position="57"/>
    </location>
    <ligand>
        <name>substrate</name>
    </ligand>
</feature>
<feature type="binding site" evidence="1">
    <location>
        <begin position="73"/>
        <end position="75"/>
    </location>
    <ligand>
        <name>substrate</name>
    </ligand>
</feature>
<feature type="modified residue" description="Pyruvic acid (Ser)" evidence="1">
    <location>
        <position position="25"/>
    </location>
</feature>
<keyword id="KW-0068">Autocatalytic cleavage</keyword>
<keyword id="KW-0963">Cytoplasm</keyword>
<keyword id="KW-0210">Decarboxylase</keyword>
<keyword id="KW-0456">Lyase</keyword>
<keyword id="KW-0566">Pantothenate biosynthesis</keyword>
<keyword id="KW-0670">Pyruvate</keyword>
<keyword id="KW-0704">Schiff base</keyword>
<keyword id="KW-0865">Zymogen</keyword>
<gene>
    <name evidence="1" type="primary">panD</name>
    <name type="ordered locus">TT_C0241</name>
</gene>
<proteinExistence type="inferred from homology"/>
<accession>Q72L22</accession>
<evidence type="ECO:0000255" key="1">
    <source>
        <dbReference type="HAMAP-Rule" id="MF_00446"/>
    </source>
</evidence>
<evidence type="ECO:0000305" key="2"/>
<protein>
    <recommendedName>
        <fullName evidence="1">Aspartate 1-decarboxylase</fullName>
        <ecNumber evidence="1">4.1.1.11</ecNumber>
    </recommendedName>
    <alternativeName>
        <fullName evidence="1">Aspartate alpha-decarboxylase</fullName>
    </alternativeName>
    <component>
        <recommendedName>
            <fullName evidence="1">Aspartate 1-decarboxylase beta chain</fullName>
        </recommendedName>
    </component>
    <component>
        <recommendedName>
            <fullName evidence="1">Aspartate 1-decarboxylase alpha chain</fullName>
        </recommendedName>
    </component>
</protein>
<dbReference type="EC" id="4.1.1.11" evidence="1"/>
<dbReference type="EMBL" id="AE017221">
    <property type="protein sequence ID" value="AAS80589.1"/>
    <property type="status" value="ALT_INIT"/>
    <property type="molecule type" value="Genomic_DNA"/>
</dbReference>
<dbReference type="RefSeq" id="WP_011172694.1">
    <property type="nucleotide sequence ID" value="NZ_CP133179.1"/>
</dbReference>
<dbReference type="SMR" id="Q72L22"/>
<dbReference type="GeneID" id="3169478"/>
<dbReference type="KEGG" id="tth:TT_C0241"/>
<dbReference type="eggNOG" id="COG0853">
    <property type="taxonomic scope" value="Bacteria"/>
</dbReference>
<dbReference type="HOGENOM" id="CLU_115305_2_0_0"/>
<dbReference type="OrthoDB" id="9803983at2"/>
<dbReference type="UniPathway" id="UPA00028">
    <property type="reaction ID" value="UER00002"/>
</dbReference>
<dbReference type="Proteomes" id="UP000000592">
    <property type="component" value="Chromosome"/>
</dbReference>
<dbReference type="GO" id="GO:0005829">
    <property type="term" value="C:cytosol"/>
    <property type="evidence" value="ECO:0007669"/>
    <property type="project" value="TreeGrafter"/>
</dbReference>
<dbReference type="GO" id="GO:0004068">
    <property type="term" value="F:aspartate 1-decarboxylase activity"/>
    <property type="evidence" value="ECO:0007669"/>
    <property type="project" value="UniProtKB-UniRule"/>
</dbReference>
<dbReference type="GO" id="GO:0006523">
    <property type="term" value="P:alanine biosynthetic process"/>
    <property type="evidence" value="ECO:0007669"/>
    <property type="project" value="InterPro"/>
</dbReference>
<dbReference type="GO" id="GO:0015940">
    <property type="term" value="P:pantothenate biosynthetic process"/>
    <property type="evidence" value="ECO:0007669"/>
    <property type="project" value="UniProtKB-UniRule"/>
</dbReference>
<dbReference type="CDD" id="cd06919">
    <property type="entry name" value="Asp_decarbox"/>
    <property type="match status" value="1"/>
</dbReference>
<dbReference type="Gene3D" id="2.40.40.20">
    <property type="match status" value="1"/>
</dbReference>
<dbReference type="HAMAP" id="MF_00446">
    <property type="entry name" value="PanD"/>
    <property type="match status" value="1"/>
</dbReference>
<dbReference type="InterPro" id="IPR009010">
    <property type="entry name" value="Asp_de-COase-like_dom_sf"/>
</dbReference>
<dbReference type="InterPro" id="IPR003190">
    <property type="entry name" value="Asp_decarbox"/>
</dbReference>
<dbReference type="NCBIfam" id="TIGR00223">
    <property type="entry name" value="panD"/>
    <property type="match status" value="1"/>
</dbReference>
<dbReference type="PANTHER" id="PTHR21012">
    <property type="entry name" value="ASPARTATE 1-DECARBOXYLASE"/>
    <property type="match status" value="1"/>
</dbReference>
<dbReference type="PANTHER" id="PTHR21012:SF0">
    <property type="entry name" value="ASPARTATE 1-DECARBOXYLASE"/>
    <property type="match status" value="1"/>
</dbReference>
<dbReference type="Pfam" id="PF02261">
    <property type="entry name" value="Asp_decarbox"/>
    <property type="match status" value="1"/>
</dbReference>
<dbReference type="PIRSF" id="PIRSF006246">
    <property type="entry name" value="Asp_decarbox"/>
    <property type="match status" value="1"/>
</dbReference>
<dbReference type="SUPFAM" id="SSF50692">
    <property type="entry name" value="ADC-like"/>
    <property type="match status" value="1"/>
</dbReference>
<organism>
    <name type="scientific">Thermus thermophilus (strain ATCC BAA-163 / DSM 7039 / HB27)</name>
    <dbReference type="NCBI Taxonomy" id="262724"/>
    <lineage>
        <taxon>Bacteria</taxon>
        <taxon>Thermotogati</taxon>
        <taxon>Deinococcota</taxon>
        <taxon>Deinococci</taxon>
        <taxon>Thermales</taxon>
        <taxon>Thermaceae</taxon>
        <taxon>Thermus</taxon>
    </lineage>
</organism>
<sequence length="120" mass="13095">MKRVMFHAKIHRATVTQADLHYVGSVTVDQDLLDAAGILPFEQVDIYDITNGARLTTYALPGERGSGVIGINGAAAHLVKPGDLVILVAYGVFDEEEARNLKPTVVLVDERNRILEVRKG</sequence>
<comment type="function">
    <text evidence="1">Catalyzes the pyruvoyl-dependent decarboxylation of aspartate to produce beta-alanine.</text>
</comment>
<comment type="catalytic activity">
    <reaction evidence="1">
        <text>L-aspartate + H(+) = beta-alanine + CO2</text>
        <dbReference type="Rhea" id="RHEA:19497"/>
        <dbReference type="ChEBI" id="CHEBI:15378"/>
        <dbReference type="ChEBI" id="CHEBI:16526"/>
        <dbReference type="ChEBI" id="CHEBI:29991"/>
        <dbReference type="ChEBI" id="CHEBI:57966"/>
        <dbReference type="EC" id="4.1.1.11"/>
    </reaction>
</comment>
<comment type="cofactor">
    <cofactor evidence="1">
        <name>pyruvate</name>
        <dbReference type="ChEBI" id="CHEBI:15361"/>
    </cofactor>
    <text evidence="1">Binds 1 pyruvoyl group covalently per subunit.</text>
</comment>
<comment type="pathway">
    <text evidence="1">Cofactor biosynthesis; (R)-pantothenate biosynthesis; beta-alanine from L-aspartate: step 1/1.</text>
</comment>
<comment type="subunit">
    <text evidence="1">Heterooctamer of four alpha and four beta subunits.</text>
</comment>
<comment type="subcellular location">
    <subcellularLocation>
        <location evidence="1">Cytoplasm</location>
    </subcellularLocation>
</comment>
<comment type="PTM">
    <text evidence="1">Is synthesized initially as an inactive proenzyme, which is activated by self-cleavage at a specific serine bond to produce a beta-subunit with a hydroxyl group at its C-terminus and an alpha-subunit with a pyruvoyl group at its N-terminus.</text>
</comment>
<comment type="similarity">
    <text evidence="1">Belongs to the PanD family.</text>
</comment>
<comment type="sequence caution" evidence="2">
    <conflict type="erroneous initiation">
        <sequence resource="EMBL-CDS" id="AAS80589"/>
    </conflict>
</comment>
<name>PAND_THET2</name>